<keyword id="KW-0489">Methyltransferase</keyword>
<keyword id="KW-0949">S-adenosyl-L-methionine</keyword>
<keyword id="KW-0808">Transferase</keyword>
<keyword id="KW-0819">tRNA processing</keyword>
<sequence>MTDTQQPELTEDGRQRRTIKSFVMRAGRMTEGQQRGLDKGWPLFGLELEDGLRDFDQVFGRSAPRTFEIGFGMGHSTLEMAAAAPEQDFIGVEVHKPGVGALLNGVMAHNLSNVRVYSCDALEVLQGCVADASLDRVLLFFPDPWHKSRHHKRRIVQPAFAELVRRKLKIGGVLHMATDWENYAEHMLEVMNAAPGYRNLAADGTYVPRPEERPVTKFERRGERLGHGVWDLKFQRQE</sequence>
<gene>
    <name evidence="2" type="primary">trmB</name>
    <name type="ordered locus">Pmen_4166</name>
</gene>
<dbReference type="EC" id="2.1.1.33" evidence="2"/>
<dbReference type="EMBL" id="CP000680">
    <property type="protein sequence ID" value="ABP86913.1"/>
    <property type="molecule type" value="Genomic_DNA"/>
</dbReference>
<dbReference type="SMR" id="A4XZZ7"/>
<dbReference type="STRING" id="399739.Pmen_4166"/>
<dbReference type="KEGG" id="pmy:Pmen_4166"/>
<dbReference type="PATRIC" id="fig|399739.8.peg.4217"/>
<dbReference type="eggNOG" id="COG0220">
    <property type="taxonomic scope" value="Bacteria"/>
</dbReference>
<dbReference type="HOGENOM" id="CLU_050910_0_1_6"/>
<dbReference type="OrthoDB" id="9802090at2"/>
<dbReference type="UniPathway" id="UPA00989"/>
<dbReference type="GO" id="GO:0043527">
    <property type="term" value="C:tRNA methyltransferase complex"/>
    <property type="evidence" value="ECO:0007669"/>
    <property type="project" value="TreeGrafter"/>
</dbReference>
<dbReference type="GO" id="GO:0008176">
    <property type="term" value="F:tRNA (guanine(46)-N7)-methyltransferase activity"/>
    <property type="evidence" value="ECO:0007669"/>
    <property type="project" value="UniProtKB-UniRule"/>
</dbReference>
<dbReference type="CDD" id="cd02440">
    <property type="entry name" value="AdoMet_MTases"/>
    <property type="match status" value="1"/>
</dbReference>
<dbReference type="FunFam" id="3.40.50.150:FF:000035">
    <property type="entry name" value="tRNA (guanine-N(7)-)-methyltransferase"/>
    <property type="match status" value="1"/>
</dbReference>
<dbReference type="Gene3D" id="3.40.50.150">
    <property type="entry name" value="Vaccinia Virus protein VP39"/>
    <property type="match status" value="1"/>
</dbReference>
<dbReference type="HAMAP" id="MF_01057">
    <property type="entry name" value="tRNA_methyltr_TrmB"/>
    <property type="match status" value="1"/>
</dbReference>
<dbReference type="InterPro" id="IPR029063">
    <property type="entry name" value="SAM-dependent_MTases_sf"/>
</dbReference>
<dbReference type="InterPro" id="IPR003358">
    <property type="entry name" value="tRNA_(Gua-N-7)_MeTrfase_Trmb"/>
</dbReference>
<dbReference type="InterPro" id="IPR055361">
    <property type="entry name" value="tRNA_methyltr_TrmB_bact"/>
</dbReference>
<dbReference type="NCBIfam" id="TIGR00091">
    <property type="entry name" value="tRNA (guanosine(46)-N7)-methyltransferase TrmB"/>
    <property type="match status" value="1"/>
</dbReference>
<dbReference type="PANTHER" id="PTHR23417">
    <property type="entry name" value="3-DEOXY-D-MANNO-OCTULOSONIC-ACID TRANSFERASE/TRNA GUANINE-N 7 - -METHYLTRANSFERASE"/>
    <property type="match status" value="1"/>
</dbReference>
<dbReference type="PANTHER" id="PTHR23417:SF14">
    <property type="entry name" value="PENTACOTRIPEPTIDE-REPEAT REGION OF PRORP DOMAIN-CONTAINING PROTEIN"/>
    <property type="match status" value="1"/>
</dbReference>
<dbReference type="Pfam" id="PF02390">
    <property type="entry name" value="Methyltransf_4"/>
    <property type="match status" value="1"/>
</dbReference>
<dbReference type="SUPFAM" id="SSF53335">
    <property type="entry name" value="S-adenosyl-L-methionine-dependent methyltransferases"/>
    <property type="match status" value="1"/>
</dbReference>
<dbReference type="PROSITE" id="PS51625">
    <property type="entry name" value="SAM_MT_TRMB"/>
    <property type="match status" value="1"/>
</dbReference>
<reference key="1">
    <citation type="submission" date="2007-04" db="EMBL/GenBank/DDBJ databases">
        <title>Complete sequence of Pseudomonas mendocina ymp.</title>
        <authorList>
            <consortium name="US DOE Joint Genome Institute"/>
            <person name="Copeland A."/>
            <person name="Lucas S."/>
            <person name="Lapidus A."/>
            <person name="Barry K."/>
            <person name="Glavina del Rio T."/>
            <person name="Dalin E."/>
            <person name="Tice H."/>
            <person name="Pitluck S."/>
            <person name="Kiss H."/>
            <person name="Brettin T."/>
            <person name="Detter J.C."/>
            <person name="Bruce D."/>
            <person name="Han C."/>
            <person name="Schmutz J."/>
            <person name="Larimer F."/>
            <person name="Land M."/>
            <person name="Hauser L."/>
            <person name="Kyrpides N."/>
            <person name="Mikhailova N."/>
            <person name="Hersman L."/>
            <person name="Dubois J."/>
            <person name="Maurice P."/>
            <person name="Richardson P."/>
        </authorList>
    </citation>
    <scope>NUCLEOTIDE SEQUENCE [LARGE SCALE GENOMIC DNA]</scope>
    <source>
        <strain>ymp</strain>
    </source>
</reference>
<proteinExistence type="inferred from homology"/>
<comment type="function">
    <text evidence="2">Catalyzes the formation of N(7)-methylguanine at position 46 (m7G46) in tRNA.</text>
</comment>
<comment type="catalytic activity">
    <reaction evidence="2">
        <text>guanosine(46) in tRNA + S-adenosyl-L-methionine = N(7)-methylguanosine(46) in tRNA + S-adenosyl-L-homocysteine</text>
        <dbReference type="Rhea" id="RHEA:42708"/>
        <dbReference type="Rhea" id="RHEA-COMP:10188"/>
        <dbReference type="Rhea" id="RHEA-COMP:10189"/>
        <dbReference type="ChEBI" id="CHEBI:57856"/>
        <dbReference type="ChEBI" id="CHEBI:59789"/>
        <dbReference type="ChEBI" id="CHEBI:74269"/>
        <dbReference type="ChEBI" id="CHEBI:74480"/>
        <dbReference type="EC" id="2.1.1.33"/>
    </reaction>
</comment>
<comment type="pathway">
    <text evidence="2">tRNA modification; N(7)-methylguanine-tRNA biosynthesis.</text>
</comment>
<comment type="similarity">
    <text evidence="2">Belongs to the class I-like SAM-binding methyltransferase superfamily. TrmB family.</text>
</comment>
<evidence type="ECO:0000250" key="1"/>
<evidence type="ECO:0000255" key="2">
    <source>
        <dbReference type="HAMAP-Rule" id="MF_01057"/>
    </source>
</evidence>
<name>TRMB_ECTM1</name>
<organism>
    <name type="scientific">Ectopseudomonas mendocina (strain ymp)</name>
    <name type="common">Pseudomonas mendocina</name>
    <dbReference type="NCBI Taxonomy" id="399739"/>
    <lineage>
        <taxon>Bacteria</taxon>
        <taxon>Pseudomonadati</taxon>
        <taxon>Pseudomonadota</taxon>
        <taxon>Gammaproteobacteria</taxon>
        <taxon>Pseudomonadales</taxon>
        <taxon>Pseudomonadaceae</taxon>
        <taxon>Ectopseudomonas</taxon>
    </lineage>
</organism>
<feature type="chain" id="PRO_1000064404" description="tRNA (guanine-N(7)-)-methyltransferase">
    <location>
        <begin position="1"/>
        <end position="238"/>
    </location>
</feature>
<feature type="active site" evidence="1">
    <location>
        <position position="143"/>
    </location>
</feature>
<feature type="binding site" evidence="2">
    <location>
        <position position="68"/>
    </location>
    <ligand>
        <name>S-adenosyl-L-methionine</name>
        <dbReference type="ChEBI" id="CHEBI:59789"/>
    </ligand>
</feature>
<feature type="binding site" evidence="2">
    <location>
        <position position="93"/>
    </location>
    <ligand>
        <name>S-adenosyl-L-methionine</name>
        <dbReference type="ChEBI" id="CHEBI:59789"/>
    </ligand>
</feature>
<feature type="binding site" evidence="2">
    <location>
        <position position="120"/>
    </location>
    <ligand>
        <name>S-adenosyl-L-methionine</name>
        <dbReference type="ChEBI" id="CHEBI:59789"/>
    </ligand>
</feature>
<feature type="binding site" evidence="2">
    <location>
        <position position="143"/>
    </location>
    <ligand>
        <name>S-adenosyl-L-methionine</name>
        <dbReference type="ChEBI" id="CHEBI:59789"/>
    </ligand>
</feature>
<feature type="binding site" evidence="2">
    <location>
        <position position="147"/>
    </location>
    <ligand>
        <name>substrate</name>
    </ligand>
</feature>
<feature type="binding site" evidence="2">
    <location>
        <position position="179"/>
    </location>
    <ligand>
        <name>substrate</name>
    </ligand>
</feature>
<feature type="binding site" evidence="2">
    <location>
        <begin position="216"/>
        <end position="219"/>
    </location>
    <ligand>
        <name>substrate</name>
    </ligand>
</feature>
<protein>
    <recommendedName>
        <fullName evidence="2">tRNA (guanine-N(7)-)-methyltransferase</fullName>
        <ecNumber evidence="2">2.1.1.33</ecNumber>
    </recommendedName>
    <alternativeName>
        <fullName evidence="2">tRNA (guanine(46)-N(7))-methyltransferase</fullName>
    </alternativeName>
    <alternativeName>
        <fullName evidence="2">tRNA(m7G46)-methyltransferase</fullName>
    </alternativeName>
</protein>
<accession>A4XZZ7</accession>